<reference key="1">
    <citation type="journal article" date="2003" name="Proc. Natl. Acad. Sci. U.S.A.">
        <title>Genome sequence of the cyanobacterium Prochlorococcus marinus SS120, a nearly minimal oxyphototrophic genome.</title>
        <authorList>
            <person name="Dufresne A."/>
            <person name="Salanoubat M."/>
            <person name="Partensky F."/>
            <person name="Artiguenave F."/>
            <person name="Axmann I.M."/>
            <person name="Barbe V."/>
            <person name="Duprat S."/>
            <person name="Galperin M.Y."/>
            <person name="Koonin E.V."/>
            <person name="Le Gall F."/>
            <person name="Makarova K.S."/>
            <person name="Ostrowski M."/>
            <person name="Oztas S."/>
            <person name="Robert C."/>
            <person name="Rogozin I.B."/>
            <person name="Scanlan D.J."/>
            <person name="Tandeau de Marsac N."/>
            <person name="Weissenbach J."/>
            <person name="Wincker P."/>
            <person name="Wolf Y.I."/>
            <person name="Hess W.R."/>
        </authorList>
    </citation>
    <scope>NUCLEOTIDE SEQUENCE [LARGE SCALE GENOMIC DNA]</scope>
    <source>
        <strain>SARG / CCMP1375 / SS120</strain>
    </source>
</reference>
<comment type="function">
    <text evidence="1">Binds 23S rRNA and is also seen to make contacts with the A and possibly P site tRNAs.</text>
</comment>
<comment type="subunit">
    <text evidence="1">Part of the 50S ribosomal subunit.</text>
</comment>
<comment type="similarity">
    <text evidence="1">Belongs to the universal ribosomal protein uL16 family.</text>
</comment>
<name>RL16_PROMA</name>
<dbReference type="EMBL" id="AE017126">
    <property type="protein sequence ID" value="AAQ00749.1"/>
    <property type="molecule type" value="Genomic_DNA"/>
</dbReference>
<dbReference type="RefSeq" id="NP_876096.1">
    <property type="nucleotide sequence ID" value="NC_005042.1"/>
</dbReference>
<dbReference type="RefSeq" id="WP_011125854.1">
    <property type="nucleotide sequence ID" value="NC_005042.1"/>
</dbReference>
<dbReference type="SMR" id="Q7V9W9"/>
<dbReference type="STRING" id="167539.Pro_1705"/>
<dbReference type="EnsemblBacteria" id="AAQ00749">
    <property type="protein sequence ID" value="AAQ00749"/>
    <property type="gene ID" value="Pro_1705"/>
</dbReference>
<dbReference type="KEGG" id="pma:Pro_1705"/>
<dbReference type="PATRIC" id="fig|167539.5.peg.1800"/>
<dbReference type="eggNOG" id="COG0197">
    <property type="taxonomic scope" value="Bacteria"/>
</dbReference>
<dbReference type="HOGENOM" id="CLU_078858_2_1_3"/>
<dbReference type="OrthoDB" id="9802589at2"/>
<dbReference type="Proteomes" id="UP000001420">
    <property type="component" value="Chromosome"/>
</dbReference>
<dbReference type="GO" id="GO:1990904">
    <property type="term" value="C:ribonucleoprotein complex"/>
    <property type="evidence" value="ECO:0007669"/>
    <property type="project" value="UniProtKB-KW"/>
</dbReference>
<dbReference type="GO" id="GO:0005840">
    <property type="term" value="C:ribosome"/>
    <property type="evidence" value="ECO:0007669"/>
    <property type="project" value="UniProtKB-KW"/>
</dbReference>
<dbReference type="GO" id="GO:0019843">
    <property type="term" value="F:rRNA binding"/>
    <property type="evidence" value="ECO:0007669"/>
    <property type="project" value="UniProtKB-UniRule"/>
</dbReference>
<dbReference type="GO" id="GO:0003735">
    <property type="term" value="F:structural constituent of ribosome"/>
    <property type="evidence" value="ECO:0007669"/>
    <property type="project" value="InterPro"/>
</dbReference>
<dbReference type="GO" id="GO:0000049">
    <property type="term" value="F:tRNA binding"/>
    <property type="evidence" value="ECO:0007669"/>
    <property type="project" value="UniProtKB-KW"/>
</dbReference>
<dbReference type="GO" id="GO:0006412">
    <property type="term" value="P:translation"/>
    <property type="evidence" value="ECO:0007669"/>
    <property type="project" value="UniProtKB-UniRule"/>
</dbReference>
<dbReference type="CDD" id="cd01433">
    <property type="entry name" value="Ribosomal_L16_L10e"/>
    <property type="match status" value="1"/>
</dbReference>
<dbReference type="FunFam" id="3.90.1170.10:FF:000001">
    <property type="entry name" value="50S ribosomal protein L16"/>
    <property type="match status" value="1"/>
</dbReference>
<dbReference type="Gene3D" id="3.90.1170.10">
    <property type="entry name" value="Ribosomal protein L10e/L16"/>
    <property type="match status" value="1"/>
</dbReference>
<dbReference type="HAMAP" id="MF_01342">
    <property type="entry name" value="Ribosomal_uL16"/>
    <property type="match status" value="1"/>
</dbReference>
<dbReference type="InterPro" id="IPR047873">
    <property type="entry name" value="Ribosomal_uL16"/>
</dbReference>
<dbReference type="InterPro" id="IPR000114">
    <property type="entry name" value="Ribosomal_uL16_bact-type"/>
</dbReference>
<dbReference type="InterPro" id="IPR020798">
    <property type="entry name" value="Ribosomal_uL16_CS"/>
</dbReference>
<dbReference type="InterPro" id="IPR016180">
    <property type="entry name" value="Ribosomal_uL16_dom"/>
</dbReference>
<dbReference type="InterPro" id="IPR036920">
    <property type="entry name" value="Ribosomal_uL16_sf"/>
</dbReference>
<dbReference type="NCBIfam" id="TIGR01164">
    <property type="entry name" value="rplP_bact"/>
    <property type="match status" value="1"/>
</dbReference>
<dbReference type="PANTHER" id="PTHR12220">
    <property type="entry name" value="50S/60S RIBOSOMAL PROTEIN L16"/>
    <property type="match status" value="1"/>
</dbReference>
<dbReference type="PANTHER" id="PTHR12220:SF13">
    <property type="entry name" value="LARGE RIBOSOMAL SUBUNIT PROTEIN UL16M"/>
    <property type="match status" value="1"/>
</dbReference>
<dbReference type="Pfam" id="PF00252">
    <property type="entry name" value="Ribosomal_L16"/>
    <property type="match status" value="1"/>
</dbReference>
<dbReference type="PRINTS" id="PR00060">
    <property type="entry name" value="RIBOSOMALL16"/>
</dbReference>
<dbReference type="SUPFAM" id="SSF54686">
    <property type="entry name" value="Ribosomal protein L16p/L10e"/>
    <property type="match status" value="1"/>
</dbReference>
<dbReference type="PROSITE" id="PS00586">
    <property type="entry name" value="RIBOSOMAL_L16_1"/>
    <property type="match status" value="1"/>
</dbReference>
<dbReference type="PROSITE" id="PS00701">
    <property type="entry name" value="RIBOSOMAL_L16_2"/>
    <property type="match status" value="1"/>
</dbReference>
<keyword id="KW-1185">Reference proteome</keyword>
<keyword id="KW-0687">Ribonucleoprotein</keyword>
<keyword id="KW-0689">Ribosomal protein</keyword>
<keyword id="KW-0694">RNA-binding</keyword>
<keyword id="KW-0699">rRNA-binding</keyword>
<keyword id="KW-0820">tRNA-binding</keyword>
<accession>Q7V9W9</accession>
<evidence type="ECO:0000255" key="1">
    <source>
        <dbReference type="HAMAP-Rule" id="MF_01342"/>
    </source>
</evidence>
<evidence type="ECO:0000256" key="2">
    <source>
        <dbReference type="SAM" id="MobiDB-lite"/>
    </source>
</evidence>
<evidence type="ECO:0000305" key="3"/>
<protein>
    <recommendedName>
        <fullName evidence="1">Large ribosomal subunit protein uL16</fullName>
    </recommendedName>
    <alternativeName>
        <fullName evidence="3">50S ribosomal protein L16</fullName>
    </alternativeName>
</protein>
<gene>
    <name evidence="1" type="primary">rplP</name>
    <name evidence="1" type="synonym">rpl16</name>
    <name type="ordered locus">Pro_1705</name>
</gene>
<proteinExistence type="inferred from homology"/>
<sequence length="182" mass="20131">MLSPKRTKFRKQQRGRMRGVATRGNKIAFGQFALQAQECGWITSRQIEASRRAMTRYVKRGGQIWIRIFPDKPVTMRPAETRMGSGKGNPEFWVAVVKPGRILFEMGGEEITEEIAKEAMRLAQYKLPIKTKFLALAEGEKPTQVGKAPPKSSFLPSDETETAAAQAGTEASSASSVTPLES</sequence>
<organism>
    <name type="scientific">Prochlorococcus marinus (strain SARG / CCMP1375 / SS120)</name>
    <dbReference type="NCBI Taxonomy" id="167539"/>
    <lineage>
        <taxon>Bacteria</taxon>
        <taxon>Bacillati</taxon>
        <taxon>Cyanobacteriota</taxon>
        <taxon>Cyanophyceae</taxon>
        <taxon>Synechococcales</taxon>
        <taxon>Prochlorococcaceae</taxon>
        <taxon>Prochlorococcus</taxon>
    </lineage>
</organism>
<feature type="chain" id="PRO_0000062167" description="Large ribosomal subunit protein uL16">
    <location>
        <begin position="1"/>
        <end position="182"/>
    </location>
</feature>
<feature type="region of interest" description="Disordered" evidence="2">
    <location>
        <begin position="140"/>
        <end position="182"/>
    </location>
</feature>
<feature type="compositionally biased region" description="Low complexity" evidence="2">
    <location>
        <begin position="162"/>
        <end position="176"/>
    </location>
</feature>